<sequence>MVMMSKQLTAQAPVDPIVLGKMGSSYGIRGWLRVFSSTEDAESIFDYQPWFIQKAGQWQQVQLESWKHHNQDMIIKLKGVDDRDAANLLTNCEIVVDSSQLPQLEEGDYYWKDLMGCQVVTTEGYDLGKVVDMMETGSNDVLVIKANLKDAFGIKERLVPFLDGQVIKKVDLTTRSIEVDWDPGF</sequence>
<accession>Q32CY0</accession>
<feature type="chain" id="PRO_0000244167" description="Ribosome maturation factor RimM">
    <location>
        <begin position="1"/>
        <end position="185"/>
    </location>
</feature>
<feature type="domain" description="PRC barrel" evidence="1">
    <location>
        <begin position="106"/>
        <end position="185"/>
    </location>
</feature>
<organism>
    <name type="scientific">Shigella dysenteriae serotype 1 (strain Sd197)</name>
    <dbReference type="NCBI Taxonomy" id="300267"/>
    <lineage>
        <taxon>Bacteria</taxon>
        <taxon>Pseudomonadati</taxon>
        <taxon>Pseudomonadota</taxon>
        <taxon>Gammaproteobacteria</taxon>
        <taxon>Enterobacterales</taxon>
        <taxon>Enterobacteriaceae</taxon>
        <taxon>Shigella</taxon>
    </lineage>
</organism>
<name>RIMM_SHIDS</name>
<dbReference type="EMBL" id="CP000034">
    <property type="protein sequence ID" value="ABB62825.1"/>
    <property type="molecule type" value="Genomic_DNA"/>
</dbReference>
<dbReference type="SMR" id="Q32CY0"/>
<dbReference type="STRING" id="300267.SDY_2782"/>
<dbReference type="EnsemblBacteria" id="ABB62825">
    <property type="protein sequence ID" value="ABB62825"/>
    <property type="gene ID" value="SDY_2782"/>
</dbReference>
<dbReference type="KEGG" id="sdy:SDY_2782"/>
<dbReference type="HOGENOM" id="CLU_077636_1_0_6"/>
<dbReference type="Proteomes" id="UP000002716">
    <property type="component" value="Chromosome"/>
</dbReference>
<dbReference type="GO" id="GO:0005737">
    <property type="term" value="C:cytoplasm"/>
    <property type="evidence" value="ECO:0007669"/>
    <property type="project" value="UniProtKB-SubCell"/>
</dbReference>
<dbReference type="GO" id="GO:0005840">
    <property type="term" value="C:ribosome"/>
    <property type="evidence" value="ECO:0007669"/>
    <property type="project" value="InterPro"/>
</dbReference>
<dbReference type="GO" id="GO:0043022">
    <property type="term" value="F:ribosome binding"/>
    <property type="evidence" value="ECO:0007669"/>
    <property type="project" value="InterPro"/>
</dbReference>
<dbReference type="GO" id="GO:0042274">
    <property type="term" value="P:ribosomal small subunit biogenesis"/>
    <property type="evidence" value="ECO:0007669"/>
    <property type="project" value="UniProtKB-UniRule"/>
</dbReference>
<dbReference type="GO" id="GO:0006364">
    <property type="term" value="P:rRNA processing"/>
    <property type="evidence" value="ECO:0007669"/>
    <property type="project" value="UniProtKB-UniRule"/>
</dbReference>
<dbReference type="FunFam" id="2.30.30.240:FF:000001">
    <property type="entry name" value="Ribosome maturation factor RimM"/>
    <property type="match status" value="1"/>
</dbReference>
<dbReference type="FunFam" id="2.40.30.60:FF:000001">
    <property type="entry name" value="Ribosome maturation factor RimM"/>
    <property type="match status" value="1"/>
</dbReference>
<dbReference type="Gene3D" id="2.30.30.240">
    <property type="entry name" value="PRC-barrel domain"/>
    <property type="match status" value="1"/>
</dbReference>
<dbReference type="Gene3D" id="2.40.30.60">
    <property type="entry name" value="RimM"/>
    <property type="match status" value="1"/>
</dbReference>
<dbReference type="HAMAP" id="MF_00014">
    <property type="entry name" value="Ribosome_mat_RimM"/>
    <property type="match status" value="1"/>
</dbReference>
<dbReference type="InterPro" id="IPR011033">
    <property type="entry name" value="PRC_barrel-like_sf"/>
</dbReference>
<dbReference type="InterPro" id="IPR056792">
    <property type="entry name" value="PRC_RimM"/>
</dbReference>
<dbReference type="InterPro" id="IPR011961">
    <property type="entry name" value="RimM"/>
</dbReference>
<dbReference type="InterPro" id="IPR002676">
    <property type="entry name" value="RimM_N"/>
</dbReference>
<dbReference type="InterPro" id="IPR036976">
    <property type="entry name" value="RimM_N_sf"/>
</dbReference>
<dbReference type="InterPro" id="IPR009000">
    <property type="entry name" value="Transl_B-barrel_sf"/>
</dbReference>
<dbReference type="NCBIfam" id="TIGR02273">
    <property type="entry name" value="16S_RimM"/>
    <property type="match status" value="1"/>
</dbReference>
<dbReference type="PANTHER" id="PTHR33692">
    <property type="entry name" value="RIBOSOME MATURATION FACTOR RIMM"/>
    <property type="match status" value="1"/>
</dbReference>
<dbReference type="PANTHER" id="PTHR33692:SF1">
    <property type="entry name" value="RIBOSOME MATURATION FACTOR RIMM"/>
    <property type="match status" value="1"/>
</dbReference>
<dbReference type="Pfam" id="PF24986">
    <property type="entry name" value="PRC_RimM"/>
    <property type="match status" value="1"/>
</dbReference>
<dbReference type="Pfam" id="PF01782">
    <property type="entry name" value="RimM"/>
    <property type="match status" value="1"/>
</dbReference>
<dbReference type="SUPFAM" id="SSF50346">
    <property type="entry name" value="PRC-barrel domain"/>
    <property type="match status" value="1"/>
</dbReference>
<dbReference type="SUPFAM" id="SSF50447">
    <property type="entry name" value="Translation proteins"/>
    <property type="match status" value="1"/>
</dbReference>
<keyword id="KW-0143">Chaperone</keyword>
<keyword id="KW-0963">Cytoplasm</keyword>
<keyword id="KW-1185">Reference proteome</keyword>
<keyword id="KW-0690">Ribosome biogenesis</keyword>
<keyword id="KW-0698">rRNA processing</keyword>
<comment type="function">
    <text evidence="1">An accessory protein needed during the final step in the assembly of 30S ribosomal subunit, possibly for assembly of the head region. Essential for efficient processing of 16S rRNA. May be needed both before and after RbfA during the maturation of 16S rRNA. It has affinity for free ribosomal 30S subunits but not for 70S ribosomes.</text>
</comment>
<comment type="subunit">
    <text evidence="1">Binds ribosomal protein uS19.</text>
</comment>
<comment type="subcellular location">
    <subcellularLocation>
        <location evidence="1">Cytoplasm</location>
    </subcellularLocation>
</comment>
<comment type="domain">
    <text evidence="1">The PRC barrel domain binds ribosomal protein uS19.</text>
</comment>
<comment type="similarity">
    <text evidence="1">Belongs to the RimM family.</text>
</comment>
<protein>
    <recommendedName>
        <fullName evidence="1">Ribosome maturation factor RimM</fullName>
    </recommendedName>
</protein>
<evidence type="ECO:0000255" key="1">
    <source>
        <dbReference type="HAMAP-Rule" id="MF_00014"/>
    </source>
</evidence>
<gene>
    <name evidence="1" type="primary">rimM</name>
    <name type="ordered locus">SDY_2782</name>
</gene>
<reference key="1">
    <citation type="journal article" date="2005" name="Nucleic Acids Res.">
        <title>Genome dynamics and diversity of Shigella species, the etiologic agents of bacillary dysentery.</title>
        <authorList>
            <person name="Yang F."/>
            <person name="Yang J."/>
            <person name="Zhang X."/>
            <person name="Chen L."/>
            <person name="Jiang Y."/>
            <person name="Yan Y."/>
            <person name="Tang X."/>
            <person name="Wang J."/>
            <person name="Xiong Z."/>
            <person name="Dong J."/>
            <person name="Xue Y."/>
            <person name="Zhu Y."/>
            <person name="Xu X."/>
            <person name="Sun L."/>
            <person name="Chen S."/>
            <person name="Nie H."/>
            <person name="Peng J."/>
            <person name="Xu J."/>
            <person name="Wang Y."/>
            <person name="Yuan Z."/>
            <person name="Wen Y."/>
            <person name="Yao Z."/>
            <person name="Shen Y."/>
            <person name="Qiang B."/>
            <person name="Hou Y."/>
            <person name="Yu J."/>
            <person name="Jin Q."/>
        </authorList>
    </citation>
    <scope>NUCLEOTIDE SEQUENCE [LARGE SCALE GENOMIC DNA]</scope>
    <source>
        <strain>Sd197</strain>
    </source>
</reference>
<proteinExistence type="inferred from homology"/>